<evidence type="ECO:0000255" key="1"/>
<evidence type="ECO:0000255" key="2">
    <source>
        <dbReference type="PROSITE-ProRule" id="PRU00156"/>
    </source>
</evidence>
<evidence type="ECO:0000256" key="3">
    <source>
        <dbReference type="SAM" id="MobiDB-lite"/>
    </source>
</evidence>
<evidence type="ECO:0000305" key="4"/>
<comment type="function">
    <text>PPIases accelerate the folding of proteins. It catalyzes the cis-trans isomerization of proline imidic peptide bonds in oligopeptides.</text>
</comment>
<comment type="catalytic activity">
    <reaction>
        <text>[protein]-peptidylproline (omega=180) = [protein]-peptidylproline (omega=0)</text>
        <dbReference type="Rhea" id="RHEA:16237"/>
        <dbReference type="Rhea" id="RHEA-COMP:10747"/>
        <dbReference type="Rhea" id="RHEA-COMP:10748"/>
        <dbReference type="ChEBI" id="CHEBI:83833"/>
        <dbReference type="ChEBI" id="CHEBI:83834"/>
        <dbReference type="EC" id="5.2.1.8"/>
    </reaction>
</comment>
<comment type="activity regulation">
    <text>Binds cyclosporin A (CsA). CsA mediates some of its effects via an inhibitory action on PPIase.</text>
</comment>
<comment type="subcellular location">
    <subcellularLocation>
        <location>Plastid</location>
        <location>Chloroplast stroma</location>
    </subcellularLocation>
</comment>
<comment type="tissue specificity">
    <text>Highly expressed in leaf.</text>
</comment>
<comment type="similarity">
    <text evidence="4">Belongs to the cyclophilin-type PPIase family.</text>
</comment>
<proteinExistence type="evidence at protein level"/>
<name>CYPB_VICFA</name>
<protein>
    <recommendedName>
        <fullName>Peptidyl-prolyl cis-trans isomerase, chloroplastic</fullName>
        <shortName>PPIase</shortName>
        <ecNumber>5.2.1.8</ecNumber>
    </recommendedName>
    <alternativeName>
        <fullName>Cyclophilin</fullName>
    </alternativeName>
    <alternativeName>
        <fullName>Cyclosporin A-binding protein</fullName>
        <shortName>CYP B</shortName>
    </alternativeName>
    <alternativeName>
        <fullName>Rotamase</fullName>
    </alternativeName>
</protein>
<sequence length="248" mass="26547">MASSFSTQLVQSQNLLPRFHAVQGKPHVVSSIGCSKLSSTYHYAPRLSVSQQSKAKSITSRRITCASGAQGEVAELQAKVTSKIFFDIEIGGESAGRIVIGLFGDAVPKTVENFKTLSTGAKGYGYQGSFFHRIIPNFMIQGGDFTEGNGTGGVSIYGSKFEDESFDLKHVGPGVLSMANAGPNTNGSQFFICTVPTPWLDNRHVVFGHVIEGLDVVKQLESQETSKLDNSPKKPCKIAKSGELPLDG</sequence>
<keyword id="KW-0150">Chloroplast</keyword>
<keyword id="KW-0903">Direct protein sequencing</keyword>
<keyword id="KW-0413">Isomerase</keyword>
<keyword id="KW-0934">Plastid</keyword>
<keyword id="KW-0697">Rotamase</keyword>
<keyword id="KW-0809">Transit peptide</keyword>
<dbReference type="EC" id="5.2.1.8"/>
<dbReference type="EMBL" id="L32095">
    <property type="protein sequence ID" value="AAA64430.1"/>
    <property type="molecule type" value="mRNA"/>
</dbReference>
<dbReference type="PIR" id="T12096">
    <property type="entry name" value="T12096"/>
</dbReference>
<dbReference type="SMR" id="Q41651"/>
<dbReference type="EnsemblPlants" id="Vfaba.Hedin2.R1.3g095320.1">
    <property type="protein sequence ID" value="cds:Vfaba.Hedin2.R1.3g095320.1"/>
    <property type="gene ID" value="Vfaba.Hedin2.R1.3g095320"/>
</dbReference>
<dbReference type="Gramene" id="Vfaba.Hedin2.R1.3g095320.1">
    <property type="protein sequence ID" value="cds:Vfaba.Hedin2.R1.3g095320.1"/>
    <property type="gene ID" value="Vfaba.Hedin2.R1.3g095320"/>
</dbReference>
<dbReference type="OrthoDB" id="193499at2759"/>
<dbReference type="GO" id="GO:0009570">
    <property type="term" value="C:chloroplast stroma"/>
    <property type="evidence" value="ECO:0007669"/>
    <property type="project" value="UniProtKB-SubCell"/>
</dbReference>
<dbReference type="GO" id="GO:0016018">
    <property type="term" value="F:cyclosporin A binding"/>
    <property type="evidence" value="ECO:0007669"/>
    <property type="project" value="TreeGrafter"/>
</dbReference>
<dbReference type="GO" id="GO:0003755">
    <property type="term" value="F:peptidyl-prolyl cis-trans isomerase activity"/>
    <property type="evidence" value="ECO:0007669"/>
    <property type="project" value="UniProtKB-KW"/>
</dbReference>
<dbReference type="GO" id="GO:0006457">
    <property type="term" value="P:protein folding"/>
    <property type="evidence" value="ECO:0007669"/>
    <property type="project" value="InterPro"/>
</dbReference>
<dbReference type="CDD" id="cd01926">
    <property type="entry name" value="cyclophilin_ABH_like"/>
    <property type="match status" value="1"/>
</dbReference>
<dbReference type="FunFam" id="2.40.100.10:FF:000001">
    <property type="entry name" value="Peptidyl-prolyl cis-trans isomerase"/>
    <property type="match status" value="1"/>
</dbReference>
<dbReference type="Gene3D" id="2.40.100.10">
    <property type="entry name" value="Cyclophilin-like"/>
    <property type="match status" value="1"/>
</dbReference>
<dbReference type="InterPro" id="IPR029000">
    <property type="entry name" value="Cyclophilin-like_dom_sf"/>
</dbReference>
<dbReference type="InterPro" id="IPR020892">
    <property type="entry name" value="Cyclophilin-type_PPIase_CS"/>
</dbReference>
<dbReference type="InterPro" id="IPR002130">
    <property type="entry name" value="Cyclophilin-type_PPIase_dom"/>
</dbReference>
<dbReference type="PANTHER" id="PTHR11071">
    <property type="entry name" value="PEPTIDYL-PROLYL CIS-TRANS ISOMERASE"/>
    <property type="match status" value="1"/>
</dbReference>
<dbReference type="PANTHER" id="PTHR11071:SF420">
    <property type="entry name" value="PEPTIDYL-PROLYL CIS-TRANS ISOMERASE CYP20-3, CHLOROPLASTIC"/>
    <property type="match status" value="1"/>
</dbReference>
<dbReference type="Pfam" id="PF00160">
    <property type="entry name" value="Pro_isomerase"/>
    <property type="match status" value="1"/>
</dbReference>
<dbReference type="PRINTS" id="PR00153">
    <property type="entry name" value="CSAPPISMRASE"/>
</dbReference>
<dbReference type="SUPFAM" id="SSF50891">
    <property type="entry name" value="Cyclophilin-like"/>
    <property type="match status" value="1"/>
</dbReference>
<dbReference type="PROSITE" id="PS00170">
    <property type="entry name" value="CSA_PPIASE_1"/>
    <property type="match status" value="1"/>
</dbReference>
<dbReference type="PROSITE" id="PS50072">
    <property type="entry name" value="CSA_PPIASE_2"/>
    <property type="match status" value="1"/>
</dbReference>
<feature type="transit peptide" description="Chloroplast" evidence="1">
    <location>
        <begin position="1"/>
        <end status="unknown"/>
    </location>
</feature>
<feature type="chain" id="PRO_0000025477" description="Peptidyl-prolyl cis-trans isomerase, chloroplastic">
    <location>
        <begin status="unknown"/>
        <end position="248"/>
    </location>
</feature>
<feature type="domain" description="PPIase cyclophilin-type" evidence="2">
    <location>
        <begin position="85"/>
        <end position="243"/>
    </location>
</feature>
<feature type="region of interest" description="Disordered" evidence="3">
    <location>
        <begin position="223"/>
        <end position="248"/>
    </location>
</feature>
<reference key="1">
    <citation type="journal article" date="1994" name="Plant Cell">
        <title>pCyP B: a chloroplast-localized, heat shock-responsive cyclophilin from fava bean.</title>
        <authorList>
            <person name="Luan S."/>
            <person name="Lane W.S."/>
            <person name="Schreiber S.L."/>
        </authorList>
    </citation>
    <scope>NUCLEOTIDE SEQUENCE [MRNA]</scope>
    <scope>PARTIAL PROTEIN SEQUENCE</scope>
    <scope>CHARACTERIZATION</scope>
    <source>
        <tissue>Leaf</tissue>
    </source>
</reference>
<accession>Q41651</accession>
<organism>
    <name type="scientific">Vicia faba</name>
    <name type="common">Broad bean</name>
    <name type="synonym">Faba vulgaris</name>
    <dbReference type="NCBI Taxonomy" id="3906"/>
    <lineage>
        <taxon>Eukaryota</taxon>
        <taxon>Viridiplantae</taxon>
        <taxon>Streptophyta</taxon>
        <taxon>Embryophyta</taxon>
        <taxon>Tracheophyta</taxon>
        <taxon>Spermatophyta</taxon>
        <taxon>Magnoliopsida</taxon>
        <taxon>eudicotyledons</taxon>
        <taxon>Gunneridae</taxon>
        <taxon>Pentapetalae</taxon>
        <taxon>rosids</taxon>
        <taxon>fabids</taxon>
        <taxon>Fabales</taxon>
        <taxon>Fabaceae</taxon>
        <taxon>Papilionoideae</taxon>
        <taxon>50 kb inversion clade</taxon>
        <taxon>NPAAA clade</taxon>
        <taxon>Hologalegina</taxon>
        <taxon>IRL clade</taxon>
        <taxon>Fabeae</taxon>
        <taxon>Vicia</taxon>
    </lineage>
</organism>